<name>HAK20_ORYSJ</name>
<comment type="function">
    <text evidence="1">High-affinity potassium transporter.</text>
</comment>
<comment type="subcellular location">
    <subcellularLocation>
        <location evidence="3">Membrane</location>
        <topology evidence="3">Multi-pass membrane protein</topology>
    </subcellularLocation>
</comment>
<comment type="similarity">
    <text evidence="3">Belongs to the HAK/KUP transporter (TC 2.A.72.3) family.</text>
</comment>
<keyword id="KW-0406">Ion transport</keyword>
<keyword id="KW-0472">Membrane</keyword>
<keyword id="KW-0630">Potassium</keyword>
<keyword id="KW-0633">Potassium transport</keyword>
<keyword id="KW-1185">Reference proteome</keyword>
<keyword id="KW-0812">Transmembrane</keyword>
<keyword id="KW-1133">Transmembrane helix</keyword>
<keyword id="KW-0813">Transport</keyword>
<organism>
    <name type="scientific">Oryza sativa subsp. japonica</name>
    <name type="common">Rice</name>
    <dbReference type="NCBI Taxonomy" id="39947"/>
    <lineage>
        <taxon>Eukaryota</taxon>
        <taxon>Viridiplantae</taxon>
        <taxon>Streptophyta</taxon>
        <taxon>Embryophyta</taxon>
        <taxon>Tracheophyta</taxon>
        <taxon>Spermatophyta</taxon>
        <taxon>Magnoliopsida</taxon>
        <taxon>Liliopsida</taxon>
        <taxon>Poales</taxon>
        <taxon>Poaceae</taxon>
        <taxon>BOP clade</taxon>
        <taxon>Oryzoideae</taxon>
        <taxon>Oryzeae</taxon>
        <taxon>Oryzinae</taxon>
        <taxon>Oryza</taxon>
        <taxon>Oryza sativa</taxon>
    </lineage>
</organism>
<evidence type="ECO:0000250" key="1"/>
<evidence type="ECO:0000255" key="2"/>
<evidence type="ECO:0000305" key="3"/>
<sequence length="747" mass="82651">MSVQEDDDAAGPEVDRLRRHDSFYGDAEKVSNDKSHGTGENWARTLQLAFQSIGVVYGDVGTSPLYVYSSTFPDGVKHPDDLVGVLSLMLYTLILIPMVKYVFIVLYANDNGDGGTFALYSLISRHAKIRMIPNDQTEDANVSNYSIEAPSSQLRRAEWVKQKLESSNAAKIALFTITILGTSMVMGDGTLTPAISVLSAVSGIREKAPSLTQLQVVWISVPILIVLFSVQRFGTDKVGYSFAPVISVWFVLIAGIGAYNLAVHEITILRAFNPMYIIDYFRRNGKEAWVSLGGAVLCITGTEAMFADLGHFNIRAIQLSFTCVLFPSVALCYMGQAAYLRKFPEDVGDTFYKSLPAPLFWPVFVVAIMAAIIASQAMLSGAFAILSKALPLGCFPRVEVVHTSNKYEGQVYIPEVNFLIGVASVAITVAFQTTANIGNAYGICVVMVFSITTHLMTVVMLLIWKVRLPFIAAFYVVFTFTEFLYLSSILSKFAEGGYLPFCFSLVLMALMATWHYVHVKRYWYELDHIVPPDEMAALLARRDVRRVPGVGLLYTELVQGIPPVFPRLVDKIPSVHAVFVFMSIKHLPIPRVAPAERFIFQRVGPDAGHRIFRCVARYGYTDPLEGAKEFAAFLLDRLKVFVYEEAVFACQCAEDGGGGGGGDDDGVLRRAEEMAAEEKRLIDAEAERGLVYLMGEANVEAAPGSSLMKQIVVNYVYTRLRKNLREEHKALSIPKDQLLKVGITYEI</sequence>
<reference key="1">
    <citation type="journal article" date="2005" name="Nature">
        <title>The map-based sequence of the rice genome.</title>
        <authorList>
            <consortium name="International rice genome sequencing project (IRGSP)"/>
        </authorList>
    </citation>
    <scope>NUCLEOTIDE SEQUENCE [LARGE SCALE GENOMIC DNA]</scope>
    <source>
        <strain>cv. Nipponbare</strain>
    </source>
</reference>
<reference key="2">
    <citation type="journal article" date="2008" name="Nucleic Acids Res.">
        <title>The rice annotation project database (RAP-DB): 2008 update.</title>
        <authorList>
            <consortium name="The rice annotation project (RAP)"/>
        </authorList>
    </citation>
    <scope>GENOME REANNOTATION</scope>
    <source>
        <strain>cv. Nipponbare</strain>
    </source>
</reference>
<reference key="3">
    <citation type="journal article" date="2013" name="Rice">
        <title>Improvement of the Oryza sativa Nipponbare reference genome using next generation sequence and optical map data.</title>
        <authorList>
            <person name="Kawahara Y."/>
            <person name="de la Bastide M."/>
            <person name="Hamilton J.P."/>
            <person name="Kanamori H."/>
            <person name="McCombie W.R."/>
            <person name="Ouyang S."/>
            <person name="Schwartz D.C."/>
            <person name="Tanaka T."/>
            <person name="Wu J."/>
            <person name="Zhou S."/>
            <person name="Childs K.L."/>
            <person name="Davidson R.M."/>
            <person name="Lin H."/>
            <person name="Quesada-Ocampo L."/>
            <person name="Vaillancourt B."/>
            <person name="Sakai H."/>
            <person name="Lee S.S."/>
            <person name="Kim J."/>
            <person name="Numa H."/>
            <person name="Itoh T."/>
            <person name="Buell C.R."/>
            <person name="Matsumoto T."/>
        </authorList>
    </citation>
    <scope>GENOME REANNOTATION</scope>
    <source>
        <strain>cv. Nipponbare</strain>
    </source>
</reference>
<reference key="4">
    <citation type="journal article" date="2005" name="PLoS Biol.">
        <title>The genomes of Oryza sativa: a history of duplications.</title>
        <authorList>
            <person name="Yu J."/>
            <person name="Wang J."/>
            <person name="Lin W."/>
            <person name="Li S."/>
            <person name="Li H."/>
            <person name="Zhou J."/>
            <person name="Ni P."/>
            <person name="Dong W."/>
            <person name="Hu S."/>
            <person name="Zeng C."/>
            <person name="Zhang J."/>
            <person name="Zhang Y."/>
            <person name="Li R."/>
            <person name="Xu Z."/>
            <person name="Li S."/>
            <person name="Li X."/>
            <person name="Zheng H."/>
            <person name="Cong L."/>
            <person name="Lin L."/>
            <person name="Yin J."/>
            <person name="Geng J."/>
            <person name="Li G."/>
            <person name="Shi J."/>
            <person name="Liu J."/>
            <person name="Lv H."/>
            <person name="Li J."/>
            <person name="Wang J."/>
            <person name="Deng Y."/>
            <person name="Ran L."/>
            <person name="Shi X."/>
            <person name="Wang X."/>
            <person name="Wu Q."/>
            <person name="Li C."/>
            <person name="Ren X."/>
            <person name="Wang J."/>
            <person name="Wang X."/>
            <person name="Li D."/>
            <person name="Liu D."/>
            <person name="Zhang X."/>
            <person name="Ji Z."/>
            <person name="Zhao W."/>
            <person name="Sun Y."/>
            <person name="Zhang Z."/>
            <person name="Bao J."/>
            <person name="Han Y."/>
            <person name="Dong L."/>
            <person name="Ji J."/>
            <person name="Chen P."/>
            <person name="Wu S."/>
            <person name="Liu J."/>
            <person name="Xiao Y."/>
            <person name="Bu D."/>
            <person name="Tan J."/>
            <person name="Yang L."/>
            <person name="Ye C."/>
            <person name="Zhang J."/>
            <person name="Xu J."/>
            <person name="Zhou Y."/>
            <person name="Yu Y."/>
            <person name="Zhang B."/>
            <person name="Zhuang S."/>
            <person name="Wei H."/>
            <person name="Liu B."/>
            <person name="Lei M."/>
            <person name="Yu H."/>
            <person name="Li Y."/>
            <person name="Xu H."/>
            <person name="Wei S."/>
            <person name="He X."/>
            <person name="Fang L."/>
            <person name="Zhang Z."/>
            <person name="Zhang Y."/>
            <person name="Huang X."/>
            <person name="Su Z."/>
            <person name="Tong W."/>
            <person name="Li J."/>
            <person name="Tong Z."/>
            <person name="Li S."/>
            <person name="Ye J."/>
            <person name="Wang L."/>
            <person name="Fang L."/>
            <person name="Lei T."/>
            <person name="Chen C.-S."/>
            <person name="Chen H.-C."/>
            <person name="Xu Z."/>
            <person name="Li H."/>
            <person name="Huang H."/>
            <person name="Zhang F."/>
            <person name="Xu H."/>
            <person name="Li N."/>
            <person name="Zhao C."/>
            <person name="Li S."/>
            <person name="Dong L."/>
            <person name="Huang Y."/>
            <person name="Li L."/>
            <person name="Xi Y."/>
            <person name="Qi Q."/>
            <person name="Li W."/>
            <person name="Zhang B."/>
            <person name="Hu W."/>
            <person name="Zhang Y."/>
            <person name="Tian X."/>
            <person name="Jiao Y."/>
            <person name="Liang X."/>
            <person name="Jin J."/>
            <person name="Gao L."/>
            <person name="Zheng W."/>
            <person name="Hao B."/>
            <person name="Liu S.-M."/>
            <person name="Wang W."/>
            <person name="Yuan L."/>
            <person name="Cao M."/>
            <person name="McDermott J."/>
            <person name="Samudrala R."/>
            <person name="Wang J."/>
            <person name="Wong G.K.-S."/>
            <person name="Yang H."/>
        </authorList>
    </citation>
    <scope>NUCLEOTIDE SEQUENCE [LARGE SCALE GENOMIC DNA]</scope>
    <source>
        <strain>cv. Nipponbare</strain>
    </source>
</reference>
<reference key="5">
    <citation type="journal article" date="2003" name="Science">
        <title>Collection, mapping, and annotation of over 28,000 cDNA clones from japonica rice.</title>
        <authorList>
            <consortium name="The rice full-length cDNA consortium"/>
        </authorList>
    </citation>
    <scope>NUCLEOTIDE SEQUENCE [LARGE SCALE MRNA]</scope>
    <source>
        <strain>cv. Nipponbare</strain>
    </source>
</reference>
<reference key="6">
    <citation type="journal article" date="2009" name="J. Genet. Genomics">
        <title>Molecular evolution and functional divergence of HAK potassium transporter gene family in rice (Oryza sativa L.).</title>
        <authorList>
            <person name="Yang Z."/>
            <person name="Gao Q."/>
            <person name="Sun C."/>
            <person name="Li W."/>
            <person name="Gu S."/>
            <person name="Xu C."/>
        </authorList>
    </citation>
    <scope>GENE FAMILY</scope>
</reference>
<dbReference type="EMBL" id="AP005845">
    <property type="protein sequence ID" value="BAD26330.1"/>
    <property type="molecule type" value="Genomic_DNA"/>
</dbReference>
<dbReference type="EMBL" id="AP008208">
    <property type="protein sequence ID" value="BAF08882.1"/>
    <property type="molecule type" value="Genomic_DNA"/>
</dbReference>
<dbReference type="EMBL" id="AP014958">
    <property type="protein sequence ID" value="BAS78931.1"/>
    <property type="molecule type" value="Genomic_DNA"/>
</dbReference>
<dbReference type="EMBL" id="CM000139">
    <property type="protein sequence ID" value="EAZ23235.1"/>
    <property type="molecule type" value="Genomic_DNA"/>
</dbReference>
<dbReference type="EMBL" id="AK119325">
    <property type="protein sequence ID" value="BAG99617.1"/>
    <property type="molecule type" value="mRNA"/>
</dbReference>
<dbReference type="RefSeq" id="XP_015624829.1">
    <property type="nucleotide sequence ID" value="XM_015769343.1"/>
</dbReference>
<dbReference type="FunCoup" id="Q6H4L9">
    <property type="interactions" value="26"/>
</dbReference>
<dbReference type="STRING" id="39947.Q6H4L9"/>
<dbReference type="PaxDb" id="39947-Q6H4L9"/>
<dbReference type="EnsemblPlants" id="Os02t0519100-01">
    <property type="protein sequence ID" value="Os02t0519100-01"/>
    <property type="gene ID" value="Os02g0519100"/>
</dbReference>
<dbReference type="Gramene" id="Os02t0519100-01">
    <property type="protein sequence ID" value="Os02t0519100-01"/>
    <property type="gene ID" value="Os02g0519100"/>
</dbReference>
<dbReference type="KEGG" id="dosa:Os02g0519100"/>
<dbReference type="eggNOG" id="ENOG502QPSA">
    <property type="taxonomic scope" value="Eukaryota"/>
</dbReference>
<dbReference type="HOGENOM" id="CLU_008142_2_2_1"/>
<dbReference type="InParanoid" id="Q6H4L9"/>
<dbReference type="OMA" id="CQHTDDG"/>
<dbReference type="OrthoDB" id="504708at2759"/>
<dbReference type="Proteomes" id="UP000000763">
    <property type="component" value="Chromosome 2"/>
</dbReference>
<dbReference type="Proteomes" id="UP000007752">
    <property type="component" value="Chromosome 2"/>
</dbReference>
<dbReference type="Proteomes" id="UP000059680">
    <property type="component" value="Chromosome 2"/>
</dbReference>
<dbReference type="GO" id="GO:0016020">
    <property type="term" value="C:membrane"/>
    <property type="evidence" value="ECO:0000318"/>
    <property type="project" value="GO_Central"/>
</dbReference>
<dbReference type="GO" id="GO:0015079">
    <property type="term" value="F:potassium ion transmembrane transporter activity"/>
    <property type="evidence" value="ECO:0000318"/>
    <property type="project" value="GO_Central"/>
</dbReference>
<dbReference type="GO" id="GO:0006813">
    <property type="term" value="P:potassium ion transport"/>
    <property type="evidence" value="ECO:0000318"/>
    <property type="project" value="GO_Central"/>
</dbReference>
<dbReference type="InterPro" id="IPR003855">
    <property type="entry name" value="K+_transporter"/>
</dbReference>
<dbReference type="InterPro" id="IPR053952">
    <property type="entry name" value="K_trans_C"/>
</dbReference>
<dbReference type="InterPro" id="IPR053951">
    <property type="entry name" value="K_trans_N"/>
</dbReference>
<dbReference type="NCBIfam" id="TIGR00794">
    <property type="entry name" value="kup"/>
    <property type="match status" value="1"/>
</dbReference>
<dbReference type="PANTHER" id="PTHR30540">
    <property type="entry name" value="OSMOTIC STRESS POTASSIUM TRANSPORTER"/>
    <property type="match status" value="1"/>
</dbReference>
<dbReference type="PANTHER" id="PTHR30540:SF15">
    <property type="entry name" value="POTASSIUM TRANSPORTER 19"/>
    <property type="match status" value="1"/>
</dbReference>
<dbReference type="Pfam" id="PF02705">
    <property type="entry name" value="K_trans"/>
    <property type="match status" value="1"/>
</dbReference>
<dbReference type="Pfam" id="PF22776">
    <property type="entry name" value="K_trans_C"/>
    <property type="match status" value="1"/>
</dbReference>
<accession>Q6H4L9</accession>
<accession>A0A0P0VJP4</accession>
<gene>
    <name type="primary">HAK20</name>
    <name type="ordered locus">Os02g0519100</name>
    <name type="ordered locus">LOC_Os02g31940</name>
    <name type="ORF">OsJ_06926</name>
    <name type="ORF">P0461D06.18</name>
</gene>
<protein>
    <recommendedName>
        <fullName>Potassium transporter 20</fullName>
    </recommendedName>
    <alternativeName>
        <fullName>OsHAK20</fullName>
    </alternativeName>
</protein>
<proteinExistence type="evidence at transcript level"/>
<feature type="chain" id="PRO_0000379535" description="Potassium transporter 20">
    <location>
        <begin position="1"/>
        <end position="747"/>
    </location>
</feature>
<feature type="topological domain" description="Cytoplasmic" evidence="2">
    <location>
        <begin position="1"/>
        <end position="47"/>
    </location>
</feature>
<feature type="transmembrane region" description="Helical; Name=1" evidence="2">
    <location>
        <begin position="48"/>
        <end position="68"/>
    </location>
</feature>
<feature type="topological domain" description="Extracellular" evidence="2">
    <location>
        <begin position="69"/>
        <end position="84"/>
    </location>
</feature>
<feature type="transmembrane region" description="Helical; Name=2" evidence="2">
    <location>
        <begin position="85"/>
        <end position="105"/>
    </location>
</feature>
<feature type="topological domain" description="Cytoplasmic" evidence="2">
    <location>
        <begin position="106"/>
        <end position="171"/>
    </location>
</feature>
<feature type="transmembrane region" description="Helical; Name=3" evidence="2">
    <location>
        <begin position="172"/>
        <end position="192"/>
    </location>
</feature>
<feature type="topological domain" description="Extracellular" evidence="2">
    <location>
        <begin position="193"/>
        <end position="209"/>
    </location>
</feature>
<feature type="transmembrane region" description="Helical; Name=4" evidence="2">
    <location>
        <begin position="210"/>
        <end position="230"/>
    </location>
</feature>
<feature type="topological domain" description="Cytoplasmic" evidence="2">
    <location>
        <begin position="231"/>
        <end position="237"/>
    </location>
</feature>
<feature type="transmembrane region" description="Helical; Name=5" evidence="2">
    <location>
        <begin position="238"/>
        <end position="258"/>
    </location>
</feature>
<feature type="topological domain" description="Extracellular" evidence="2">
    <location>
        <begin position="259"/>
        <end position="288"/>
    </location>
</feature>
<feature type="transmembrane region" description="Helical; Name=6" evidence="2">
    <location>
        <begin position="289"/>
        <end position="309"/>
    </location>
</feature>
<feature type="topological domain" description="Cytoplasmic" evidence="2">
    <location>
        <begin position="310"/>
        <end position="318"/>
    </location>
</feature>
<feature type="transmembrane region" description="Helical; Name=7" evidence="2">
    <location>
        <begin position="319"/>
        <end position="339"/>
    </location>
</feature>
<feature type="topological domain" description="Extracellular" evidence="2">
    <location>
        <begin position="340"/>
        <end position="353"/>
    </location>
</feature>
<feature type="transmembrane region" description="Helical; Name=8" evidence="2">
    <location>
        <begin position="354"/>
        <end position="374"/>
    </location>
</feature>
<feature type="topological domain" description="Cytoplasmic" evidence="2">
    <location>
        <begin position="375"/>
        <end position="410"/>
    </location>
</feature>
<feature type="transmembrane region" description="Helical; Name=9" evidence="2">
    <location>
        <begin position="411"/>
        <end position="431"/>
    </location>
</feature>
<feature type="topological domain" description="Extracellular" evidence="2">
    <location>
        <begin position="432"/>
        <end position="442"/>
    </location>
</feature>
<feature type="transmembrane region" description="Helical; Name=10" evidence="2">
    <location>
        <begin position="443"/>
        <end position="463"/>
    </location>
</feature>
<feature type="topological domain" description="Cytoplasmic" evidence="2">
    <location>
        <begin position="464"/>
        <end position="469"/>
    </location>
</feature>
<feature type="transmembrane region" description="Helical; Name=11" evidence="2">
    <location>
        <begin position="470"/>
        <end position="490"/>
    </location>
</feature>
<feature type="topological domain" description="Extracellular" evidence="2">
    <location>
        <begin position="491"/>
        <end position="496"/>
    </location>
</feature>
<feature type="transmembrane region" description="Helical; Name=12" evidence="2">
    <location>
        <begin position="497"/>
        <end position="517"/>
    </location>
</feature>
<feature type="topological domain" description="Cytoplasmic" evidence="2">
    <location>
        <begin position="518"/>
        <end position="747"/>
    </location>
</feature>